<proteinExistence type="inferred from homology"/>
<protein>
    <recommendedName>
        <fullName evidence="1">tRNA-specific 2-thiouridylase MnmA</fullName>
        <ecNumber evidence="1">2.8.1.13</ecNumber>
    </recommendedName>
</protein>
<gene>
    <name evidence="1" type="primary">mnmA</name>
    <name type="synonym">trmU</name>
    <name type="ordered locus">PFL_3891</name>
</gene>
<evidence type="ECO:0000255" key="1">
    <source>
        <dbReference type="HAMAP-Rule" id="MF_00144"/>
    </source>
</evidence>
<comment type="function">
    <text evidence="1">Catalyzes the 2-thiolation of uridine at the wobble position (U34) of tRNA, leading to the formation of s(2)U34.</text>
</comment>
<comment type="catalytic activity">
    <reaction evidence="1">
        <text>S-sulfanyl-L-cysteinyl-[protein] + uridine(34) in tRNA + AH2 + ATP = 2-thiouridine(34) in tRNA + L-cysteinyl-[protein] + A + AMP + diphosphate + H(+)</text>
        <dbReference type="Rhea" id="RHEA:47032"/>
        <dbReference type="Rhea" id="RHEA-COMP:10131"/>
        <dbReference type="Rhea" id="RHEA-COMP:11726"/>
        <dbReference type="Rhea" id="RHEA-COMP:11727"/>
        <dbReference type="Rhea" id="RHEA-COMP:11728"/>
        <dbReference type="ChEBI" id="CHEBI:13193"/>
        <dbReference type="ChEBI" id="CHEBI:15378"/>
        <dbReference type="ChEBI" id="CHEBI:17499"/>
        <dbReference type="ChEBI" id="CHEBI:29950"/>
        <dbReference type="ChEBI" id="CHEBI:30616"/>
        <dbReference type="ChEBI" id="CHEBI:33019"/>
        <dbReference type="ChEBI" id="CHEBI:61963"/>
        <dbReference type="ChEBI" id="CHEBI:65315"/>
        <dbReference type="ChEBI" id="CHEBI:87170"/>
        <dbReference type="ChEBI" id="CHEBI:456215"/>
        <dbReference type="EC" id="2.8.1.13"/>
    </reaction>
</comment>
<comment type="subcellular location">
    <subcellularLocation>
        <location evidence="1">Cytoplasm</location>
    </subcellularLocation>
</comment>
<comment type="similarity">
    <text evidence="1">Belongs to the MnmA/TRMU family.</text>
</comment>
<accession>Q4K9U2</accession>
<keyword id="KW-0067">ATP-binding</keyword>
<keyword id="KW-0963">Cytoplasm</keyword>
<keyword id="KW-1015">Disulfide bond</keyword>
<keyword id="KW-0547">Nucleotide-binding</keyword>
<keyword id="KW-0694">RNA-binding</keyword>
<keyword id="KW-0808">Transferase</keyword>
<keyword id="KW-0819">tRNA processing</keyword>
<keyword id="KW-0820">tRNA-binding</keyword>
<reference key="1">
    <citation type="journal article" date="2005" name="Nat. Biotechnol.">
        <title>Complete genome sequence of the plant commensal Pseudomonas fluorescens Pf-5.</title>
        <authorList>
            <person name="Paulsen I.T."/>
            <person name="Press C.M."/>
            <person name="Ravel J."/>
            <person name="Kobayashi D.Y."/>
            <person name="Myers G.S.A."/>
            <person name="Mavrodi D.V."/>
            <person name="DeBoy R.T."/>
            <person name="Seshadri R."/>
            <person name="Ren Q."/>
            <person name="Madupu R."/>
            <person name="Dodson R.J."/>
            <person name="Durkin A.S."/>
            <person name="Brinkac L.M."/>
            <person name="Daugherty S.C."/>
            <person name="Sullivan S.A."/>
            <person name="Rosovitz M.J."/>
            <person name="Gwinn M.L."/>
            <person name="Zhou L."/>
            <person name="Schneider D.J."/>
            <person name="Cartinhour S.W."/>
            <person name="Nelson W.C."/>
            <person name="Weidman J."/>
            <person name="Watkins K."/>
            <person name="Tran K."/>
            <person name="Khouri H."/>
            <person name="Pierson E.A."/>
            <person name="Pierson L.S. III"/>
            <person name="Thomashow L.S."/>
            <person name="Loper J.E."/>
        </authorList>
    </citation>
    <scope>NUCLEOTIDE SEQUENCE [LARGE SCALE GENOMIC DNA]</scope>
    <source>
        <strain>ATCC BAA-477 / NRRL B-23932 / Pf-5</strain>
    </source>
</reference>
<dbReference type="EC" id="2.8.1.13" evidence="1"/>
<dbReference type="EMBL" id="CP000076">
    <property type="protein sequence ID" value="AAY93155.1"/>
    <property type="molecule type" value="Genomic_DNA"/>
</dbReference>
<dbReference type="RefSeq" id="WP_011062178.1">
    <property type="nucleotide sequence ID" value="NC_004129.6"/>
</dbReference>
<dbReference type="SMR" id="Q4K9U2"/>
<dbReference type="STRING" id="220664.PFL_3891"/>
<dbReference type="KEGG" id="pfl:PFL_3891"/>
<dbReference type="PATRIC" id="fig|220664.5.peg.3986"/>
<dbReference type="eggNOG" id="COG0482">
    <property type="taxonomic scope" value="Bacteria"/>
</dbReference>
<dbReference type="HOGENOM" id="CLU_035188_1_0_6"/>
<dbReference type="Proteomes" id="UP000008540">
    <property type="component" value="Chromosome"/>
</dbReference>
<dbReference type="GO" id="GO:0005737">
    <property type="term" value="C:cytoplasm"/>
    <property type="evidence" value="ECO:0007669"/>
    <property type="project" value="UniProtKB-SubCell"/>
</dbReference>
<dbReference type="GO" id="GO:0005524">
    <property type="term" value="F:ATP binding"/>
    <property type="evidence" value="ECO:0007669"/>
    <property type="project" value="UniProtKB-KW"/>
</dbReference>
<dbReference type="GO" id="GO:0000049">
    <property type="term" value="F:tRNA binding"/>
    <property type="evidence" value="ECO:0007669"/>
    <property type="project" value="UniProtKB-KW"/>
</dbReference>
<dbReference type="GO" id="GO:0103016">
    <property type="term" value="F:tRNA-uridine 2-sulfurtransferase activity"/>
    <property type="evidence" value="ECO:0007669"/>
    <property type="project" value="UniProtKB-EC"/>
</dbReference>
<dbReference type="GO" id="GO:0002143">
    <property type="term" value="P:tRNA wobble position uridine thiolation"/>
    <property type="evidence" value="ECO:0007669"/>
    <property type="project" value="TreeGrafter"/>
</dbReference>
<dbReference type="CDD" id="cd01998">
    <property type="entry name" value="MnmA_TRMU-like"/>
    <property type="match status" value="1"/>
</dbReference>
<dbReference type="FunFam" id="2.30.30.280:FF:000001">
    <property type="entry name" value="tRNA-specific 2-thiouridylase MnmA"/>
    <property type="match status" value="1"/>
</dbReference>
<dbReference type="FunFam" id="2.40.30.10:FF:000023">
    <property type="entry name" value="tRNA-specific 2-thiouridylase MnmA"/>
    <property type="match status" value="1"/>
</dbReference>
<dbReference type="FunFam" id="3.40.50.620:FF:000004">
    <property type="entry name" value="tRNA-specific 2-thiouridylase MnmA"/>
    <property type="match status" value="1"/>
</dbReference>
<dbReference type="Gene3D" id="2.30.30.280">
    <property type="entry name" value="Adenine nucleotide alpha hydrolases-like domains"/>
    <property type="match status" value="1"/>
</dbReference>
<dbReference type="Gene3D" id="3.40.50.620">
    <property type="entry name" value="HUPs"/>
    <property type="match status" value="1"/>
</dbReference>
<dbReference type="Gene3D" id="2.40.30.10">
    <property type="entry name" value="Translation factors"/>
    <property type="match status" value="1"/>
</dbReference>
<dbReference type="HAMAP" id="MF_00144">
    <property type="entry name" value="tRNA_thiouridyl_MnmA"/>
    <property type="match status" value="1"/>
</dbReference>
<dbReference type="InterPro" id="IPR004506">
    <property type="entry name" value="MnmA-like"/>
</dbReference>
<dbReference type="InterPro" id="IPR046885">
    <property type="entry name" value="MnmA-like_C"/>
</dbReference>
<dbReference type="InterPro" id="IPR046884">
    <property type="entry name" value="MnmA-like_central"/>
</dbReference>
<dbReference type="InterPro" id="IPR023382">
    <property type="entry name" value="MnmA-like_central_sf"/>
</dbReference>
<dbReference type="InterPro" id="IPR014729">
    <property type="entry name" value="Rossmann-like_a/b/a_fold"/>
</dbReference>
<dbReference type="NCBIfam" id="NF001138">
    <property type="entry name" value="PRK00143.1"/>
    <property type="match status" value="1"/>
</dbReference>
<dbReference type="NCBIfam" id="TIGR00420">
    <property type="entry name" value="trmU"/>
    <property type="match status" value="1"/>
</dbReference>
<dbReference type="PANTHER" id="PTHR11933:SF5">
    <property type="entry name" value="MITOCHONDRIAL TRNA-SPECIFIC 2-THIOURIDYLASE 1"/>
    <property type="match status" value="1"/>
</dbReference>
<dbReference type="PANTHER" id="PTHR11933">
    <property type="entry name" value="TRNA 5-METHYLAMINOMETHYL-2-THIOURIDYLATE -METHYLTRANSFERASE"/>
    <property type="match status" value="1"/>
</dbReference>
<dbReference type="Pfam" id="PF03054">
    <property type="entry name" value="tRNA_Me_trans"/>
    <property type="match status" value="1"/>
</dbReference>
<dbReference type="Pfam" id="PF20258">
    <property type="entry name" value="tRNA_Me_trans_C"/>
    <property type="match status" value="1"/>
</dbReference>
<dbReference type="Pfam" id="PF20259">
    <property type="entry name" value="tRNA_Me_trans_M"/>
    <property type="match status" value="1"/>
</dbReference>
<dbReference type="SUPFAM" id="SSF52402">
    <property type="entry name" value="Adenine nucleotide alpha hydrolases-like"/>
    <property type="match status" value="1"/>
</dbReference>
<sequence>MRDPAPSDTQKKRVIVGMSGGVDSSVSALLLMEQGYQVEGLFMKNWEEDDGTEYCTAMDDLADAQAVCDKIGIKLHTANFAAEYWDNVFEHFLAEYKAGRTPNPDILCNREIKFKAFLDYAMMLGADLIATGHYVRRRDIDGRTELLKGLDPNKDQSYFLHAVGGEQIAKTLFPVGELEKPEVRAIAEKHDLATAKKKDSTGICFIGERRFSDFLKQYLPAQPGEIKTTEGEVIGRHHGLMYHTIGQRQGLGIGGLKDAGEEPWYVLIKDLEHNELIVGQGNDHPWLFSRALLASDIYWVNPIDLSLPRRLTAKVRYRQSDQPCTLEKTTNGYRATFDDPQRAVTPGQSVVFYDGEICLGGGVIEVAEPWSSKDARP</sequence>
<feature type="chain" id="PRO_1000009554" description="tRNA-specific 2-thiouridylase MnmA">
    <location>
        <begin position="1"/>
        <end position="377"/>
    </location>
</feature>
<feature type="region of interest" description="Interaction with target base in tRNA" evidence="1">
    <location>
        <begin position="103"/>
        <end position="105"/>
    </location>
</feature>
<feature type="region of interest" description="Interaction with tRNA" evidence="1">
    <location>
        <begin position="154"/>
        <end position="156"/>
    </location>
</feature>
<feature type="region of interest" description="Interaction with tRNA" evidence="1">
    <location>
        <begin position="316"/>
        <end position="317"/>
    </location>
</feature>
<feature type="active site" description="Nucleophile" evidence="1">
    <location>
        <position position="108"/>
    </location>
</feature>
<feature type="active site" description="Cysteine persulfide intermediate" evidence="1">
    <location>
        <position position="204"/>
    </location>
</feature>
<feature type="binding site" evidence="1">
    <location>
        <begin position="17"/>
        <end position="24"/>
    </location>
    <ligand>
        <name>ATP</name>
        <dbReference type="ChEBI" id="CHEBI:30616"/>
    </ligand>
</feature>
<feature type="binding site" evidence="1">
    <location>
        <position position="43"/>
    </location>
    <ligand>
        <name>ATP</name>
        <dbReference type="ChEBI" id="CHEBI:30616"/>
    </ligand>
</feature>
<feature type="binding site" evidence="1">
    <location>
        <position position="132"/>
    </location>
    <ligand>
        <name>ATP</name>
        <dbReference type="ChEBI" id="CHEBI:30616"/>
    </ligand>
</feature>
<feature type="site" description="Interaction with tRNA" evidence="1">
    <location>
        <position position="133"/>
    </location>
</feature>
<feature type="site" description="Interaction with tRNA" evidence="1">
    <location>
        <position position="348"/>
    </location>
</feature>
<feature type="disulfide bond" description="Alternate" evidence="1">
    <location>
        <begin position="108"/>
        <end position="204"/>
    </location>
</feature>
<name>MNMA_PSEF5</name>
<organism>
    <name type="scientific">Pseudomonas fluorescens (strain ATCC BAA-477 / NRRL B-23932 / Pf-5)</name>
    <dbReference type="NCBI Taxonomy" id="220664"/>
    <lineage>
        <taxon>Bacteria</taxon>
        <taxon>Pseudomonadati</taxon>
        <taxon>Pseudomonadota</taxon>
        <taxon>Gammaproteobacteria</taxon>
        <taxon>Pseudomonadales</taxon>
        <taxon>Pseudomonadaceae</taxon>
        <taxon>Pseudomonas</taxon>
    </lineage>
</organism>